<keyword id="KW-0472">Membrane</keyword>
<keyword id="KW-0496">Mitochondrion</keyword>
<keyword id="KW-0999">Mitochondrion inner membrane</keyword>
<keyword id="KW-0653">Protein transport</keyword>
<keyword id="KW-1185">Reference proteome</keyword>
<keyword id="KW-0809">Transit peptide</keyword>
<keyword id="KW-0811">Translocation</keyword>
<keyword id="KW-0812">Transmembrane</keyword>
<keyword id="KW-1133">Transmembrane helix</keyword>
<keyword id="KW-0813">Transport</keyword>
<name>TIM50_CAEBR</name>
<gene>
    <name type="primary">scpl-4</name>
    <name type="synonym">tim-50</name>
    <name type="ORF">CBG09654</name>
</gene>
<sequence length="456" mass="51697">MSLSKLSQKCFSRHHARTFIRFSSSDFQSLLGPPRVPNPYADSGRNKFAAPIVPINVNNHGNVFASIKVPINETPEAVAFKPEVEEAPRVEKVEVEATKIETEKVASSPAPATPPSAIDELNSLKDSLSKLEEAAASKTSAPSGSSGDNNDQPGNAEEVEARRKRMERNTRIGGYVLLGGSVIGFISFCFYYGRAQRDEAGNVIADEFSGSFLAPFYRIANSFKLWKDYVVEPAREQLLPDPLPAPYLQPKYTIVIELKNILVHPEWTYKTGYRFLKRPALDYFLDVIGYPNFEVVIYSSESMMTAAPVVDSFDQKQRIMYKLFRDCTKYMNGHHVKDLSKLNRDLSKVIYIDFDAKSGQLNPENMLRVPEWRGNMDDTSLVDLAELLKTIHLSDAEDVRPMLQYYSQYDDPAKEFRRRAVYLAQQEEQKKQQPDDSSMLKRYSGRLFGFRRHASA</sequence>
<organism>
    <name type="scientific">Caenorhabditis briggsae</name>
    <dbReference type="NCBI Taxonomy" id="6238"/>
    <lineage>
        <taxon>Eukaryota</taxon>
        <taxon>Metazoa</taxon>
        <taxon>Ecdysozoa</taxon>
        <taxon>Nematoda</taxon>
        <taxon>Chromadorea</taxon>
        <taxon>Rhabditida</taxon>
        <taxon>Rhabditina</taxon>
        <taxon>Rhabditomorpha</taxon>
        <taxon>Rhabditoidea</taxon>
        <taxon>Rhabditidae</taxon>
        <taxon>Peloderinae</taxon>
        <taxon>Caenorhabditis</taxon>
    </lineage>
</organism>
<protein>
    <recommendedName>
        <fullName>Mitochondrial import inner membrane translocase subunit TIM50</fullName>
    </recommendedName>
    <alternativeName>
        <fullName>Small C-terminal domain Phosphatase protein 4</fullName>
    </alternativeName>
</protein>
<comment type="function">
    <text evidence="1">Essential component of the TIM23 complex, a complex that mediates the translocation of transit peptide-containing proteins across the mitochondrial inner membrane.</text>
</comment>
<comment type="subunit">
    <text evidence="1">Component of the TIM23 complex at least composed of tim-23, tim-17 and tim-50.</text>
</comment>
<comment type="subcellular location">
    <subcellularLocation>
        <location evidence="1">Mitochondrion inner membrane</location>
        <topology evidence="1">Single-pass membrane protein</topology>
    </subcellularLocation>
</comment>
<comment type="similarity">
    <text evidence="5">Belongs to the TIM50 family.</text>
</comment>
<dbReference type="EMBL" id="HE600998">
    <property type="protein sequence ID" value="CAP28957.3"/>
    <property type="molecule type" value="Genomic_DNA"/>
</dbReference>
<dbReference type="SMR" id="Q61JS7"/>
<dbReference type="FunCoup" id="Q61JS7">
    <property type="interactions" value="1729"/>
</dbReference>
<dbReference type="STRING" id="6238.Q61JS7"/>
<dbReference type="KEGG" id="cbr:CBG_09654"/>
<dbReference type="CTD" id="8579148"/>
<dbReference type="WormBase" id="CBG09654">
    <property type="protein sequence ID" value="CBP45117"/>
    <property type="gene ID" value="WBGene00031212"/>
    <property type="gene designation" value="Cbr-scpl-4"/>
</dbReference>
<dbReference type="eggNOG" id="KOG2832">
    <property type="taxonomic scope" value="Eukaryota"/>
</dbReference>
<dbReference type="HOGENOM" id="CLU_685581_0_0_1"/>
<dbReference type="InParanoid" id="Q61JS7"/>
<dbReference type="OMA" id="QYYNQFE"/>
<dbReference type="Proteomes" id="UP000008549">
    <property type="component" value="Unassembled WGS sequence"/>
</dbReference>
<dbReference type="GO" id="GO:0005744">
    <property type="term" value="C:TIM23 mitochondrial import inner membrane translocase complex"/>
    <property type="evidence" value="ECO:0000318"/>
    <property type="project" value="GO_Central"/>
</dbReference>
<dbReference type="GO" id="GO:0030150">
    <property type="term" value="P:protein import into mitochondrial matrix"/>
    <property type="evidence" value="ECO:0000318"/>
    <property type="project" value="GO_Central"/>
</dbReference>
<dbReference type="CDD" id="cd07521">
    <property type="entry name" value="HAD_FCP1-like"/>
    <property type="match status" value="1"/>
</dbReference>
<dbReference type="FunFam" id="3.40.50.1000:FF:000019">
    <property type="entry name" value="Mitochondrial import inner membrane translocase subunit TIM50"/>
    <property type="match status" value="1"/>
</dbReference>
<dbReference type="Gene3D" id="3.40.50.1000">
    <property type="entry name" value="HAD superfamily/HAD-like"/>
    <property type="match status" value="1"/>
</dbReference>
<dbReference type="InterPro" id="IPR004274">
    <property type="entry name" value="FCP1_dom"/>
</dbReference>
<dbReference type="InterPro" id="IPR036412">
    <property type="entry name" value="HAD-like_sf"/>
</dbReference>
<dbReference type="InterPro" id="IPR023214">
    <property type="entry name" value="HAD_sf"/>
</dbReference>
<dbReference type="InterPro" id="IPR050365">
    <property type="entry name" value="TIM50"/>
</dbReference>
<dbReference type="PANTHER" id="PTHR12210">
    <property type="entry name" value="DULLARD PROTEIN PHOSPHATASE"/>
    <property type="match status" value="1"/>
</dbReference>
<dbReference type="Pfam" id="PF03031">
    <property type="entry name" value="NIF"/>
    <property type="match status" value="1"/>
</dbReference>
<dbReference type="SMART" id="SM00577">
    <property type="entry name" value="CPDc"/>
    <property type="match status" value="1"/>
</dbReference>
<dbReference type="SUPFAM" id="SSF56784">
    <property type="entry name" value="HAD-like"/>
    <property type="match status" value="1"/>
</dbReference>
<dbReference type="PROSITE" id="PS50969">
    <property type="entry name" value="FCP1"/>
    <property type="match status" value="1"/>
</dbReference>
<proteinExistence type="inferred from homology"/>
<evidence type="ECO:0000250" key="1"/>
<evidence type="ECO:0000255" key="2"/>
<evidence type="ECO:0000255" key="3">
    <source>
        <dbReference type="PROSITE-ProRule" id="PRU00336"/>
    </source>
</evidence>
<evidence type="ECO:0000256" key="4">
    <source>
        <dbReference type="SAM" id="MobiDB-lite"/>
    </source>
</evidence>
<evidence type="ECO:0000305" key="5"/>
<accession>Q61JS7</accession>
<accession>A8X8J6</accession>
<feature type="transit peptide" description="Mitochondrion" evidence="2">
    <location>
        <begin position="1"/>
        <end position="22"/>
    </location>
</feature>
<feature type="chain" id="PRO_0000043119" description="Mitochondrial import inner membrane translocase subunit TIM50">
    <location>
        <begin position="23"/>
        <end position="456"/>
    </location>
</feature>
<feature type="topological domain" description="Mitochondrial matrix" evidence="2">
    <location>
        <begin position="23"/>
        <end position="171"/>
    </location>
</feature>
<feature type="transmembrane region" description="Helical" evidence="2">
    <location>
        <begin position="172"/>
        <end position="192"/>
    </location>
</feature>
<feature type="topological domain" description="Mitochondrial intermembrane" evidence="2">
    <location>
        <begin position="193"/>
        <end position="456"/>
    </location>
</feature>
<feature type="domain" description="FCP1 homology" evidence="3">
    <location>
        <begin position="247"/>
        <end position="391"/>
    </location>
</feature>
<feature type="region of interest" description="Disordered" evidence="4">
    <location>
        <begin position="101"/>
        <end position="120"/>
    </location>
</feature>
<feature type="region of interest" description="Disordered" evidence="4">
    <location>
        <begin position="132"/>
        <end position="165"/>
    </location>
</feature>
<feature type="compositionally biased region" description="Polar residues" evidence="4">
    <location>
        <begin position="137"/>
        <end position="153"/>
    </location>
</feature>
<reference key="1">
    <citation type="journal article" date="2003" name="PLoS Biol.">
        <title>The genome sequence of Caenorhabditis briggsae: a platform for comparative genomics.</title>
        <authorList>
            <person name="Stein L.D."/>
            <person name="Bao Z."/>
            <person name="Blasiar D."/>
            <person name="Blumenthal T."/>
            <person name="Brent M.R."/>
            <person name="Chen N."/>
            <person name="Chinwalla A."/>
            <person name="Clarke L."/>
            <person name="Clee C."/>
            <person name="Coghlan A."/>
            <person name="Coulson A."/>
            <person name="D'Eustachio P."/>
            <person name="Fitch D.H.A."/>
            <person name="Fulton L.A."/>
            <person name="Fulton R.E."/>
            <person name="Griffiths-Jones S."/>
            <person name="Harris T.W."/>
            <person name="Hillier L.W."/>
            <person name="Kamath R."/>
            <person name="Kuwabara P.E."/>
            <person name="Mardis E.R."/>
            <person name="Marra M.A."/>
            <person name="Miner T.L."/>
            <person name="Minx P."/>
            <person name="Mullikin J.C."/>
            <person name="Plumb R.W."/>
            <person name="Rogers J."/>
            <person name="Schein J.E."/>
            <person name="Sohrmann M."/>
            <person name="Spieth J."/>
            <person name="Stajich J.E."/>
            <person name="Wei C."/>
            <person name="Willey D."/>
            <person name="Wilson R.K."/>
            <person name="Durbin R.M."/>
            <person name="Waterston R.H."/>
        </authorList>
    </citation>
    <scope>NUCLEOTIDE SEQUENCE [LARGE SCALE GENOMIC DNA]</scope>
    <source>
        <strain>AF16</strain>
    </source>
</reference>